<protein>
    <recommendedName>
        <fullName evidence="2">Phosphoenolpyruvate synthase</fullName>
        <shortName evidence="2">PEP synthase</shortName>
        <ecNumber evidence="2">2.7.9.2</ecNumber>
    </recommendedName>
    <alternativeName>
        <fullName evidence="2">Pyruvate, water dikinase</fullName>
    </alternativeName>
</protein>
<name>PPSA_PSEAB</name>
<gene>
    <name type="primary">ppsA</name>
    <name type="ordered locus">PA14_41670</name>
</gene>
<comment type="function">
    <text evidence="2">Catalyzes the phosphorylation of pyruvate to phosphoenolpyruvate.</text>
</comment>
<comment type="catalytic activity">
    <reaction evidence="2">
        <text>pyruvate + ATP + H2O = phosphoenolpyruvate + AMP + phosphate + 2 H(+)</text>
        <dbReference type="Rhea" id="RHEA:11364"/>
        <dbReference type="ChEBI" id="CHEBI:15361"/>
        <dbReference type="ChEBI" id="CHEBI:15377"/>
        <dbReference type="ChEBI" id="CHEBI:15378"/>
        <dbReference type="ChEBI" id="CHEBI:30616"/>
        <dbReference type="ChEBI" id="CHEBI:43474"/>
        <dbReference type="ChEBI" id="CHEBI:58702"/>
        <dbReference type="ChEBI" id="CHEBI:456215"/>
        <dbReference type="EC" id="2.7.9.2"/>
    </reaction>
</comment>
<comment type="cofactor">
    <cofactor evidence="1">
        <name>Mg(2+)</name>
        <dbReference type="ChEBI" id="CHEBI:18420"/>
    </cofactor>
</comment>
<comment type="pathway">
    <text evidence="2">Carbohydrate biosynthesis; gluconeogenesis.</text>
</comment>
<comment type="miscellaneous">
    <text evidence="1">The reaction takes place in three steps, mediated by a phosphocarrier histidine residue located on the surface of the central domain. The two first partial reactions are catalyzed at an active site located on the N-terminal domain, and the third partial reaction is catalyzed at an active site located on the C-terminal domain. For catalytic turnover, the central domain swivels from the concave surface of the N-terminal domain to that of the C-terminal domain.</text>
</comment>
<comment type="similarity">
    <text evidence="2">Belongs to the PEP-utilizing enzyme family.</text>
</comment>
<proteinExistence type="evidence at protein level"/>
<evidence type="ECO:0000250" key="1"/>
<evidence type="ECO:0000255" key="2">
    <source>
        <dbReference type="PIRNR" id="PIRNR000854"/>
    </source>
</evidence>
<evidence type="ECO:0000269" key="3">
    <source>
    </source>
</evidence>
<accession>Q02KR1</accession>
<organism>
    <name type="scientific">Pseudomonas aeruginosa (strain UCBPP-PA14)</name>
    <dbReference type="NCBI Taxonomy" id="208963"/>
    <lineage>
        <taxon>Bacteria</taxon>
        <taxon>Pseudomonadati</taxon>
        <taxon>Pseudomonadota</taxon>
        <taxon>Gammaproteobacteria</taxon>
        <taxon>Pseudomonadales</taxon>
        <taxon>Pseudomonadaceae</taxon>
        <taxon>Pseudomonas</taxon>
    </lineage>
</organism>
<reference key="1">
    <citation type="journal article" date="2006" name="Genome Biol.">
        <title>Genomic analysis reveals that Pseudomonas aeruginosa virulence is combinatorial.</title>
        <authorList>
            <person name="Lee D.G."/>
            <person name="Urbach J.M."/>
            <person name="Wu G."/>
            <person name="Liberati N.T."/>
            <person name="Feinbaum R.L."/>
            <person name="Miyata S."/>
            <person name="Diggins L.T."/>
            <person name="He J."/>
            <person name="Saucier M."/>
            <person name="Deziel E."/>
            <person name="Friedman L."/>
            <person name="Li L."/>
            <person name="Grills G."/>
            <person name="Montgomery K."/>
            <person name="Kucherlapati R."/>
            <person name="Rahme L.G."/>
            <person name="Ausubel F.M."/>
        </authorList>
    </citation>
    <scope>NUCLEOTIDE SEQUENCE [LARGE SCALE GENOMIC DNA]</scope>
    <source>
        <strain>UCBPP-PA14</strain>
    </source>
</reference>
<reference key="2">
    <citation type="journal article" date="2014" name="Anal. Bioanal. Chem.">
        <title>Potential of liquid-isoelectric-focusing protein fractionation to improve phosphoprotein characterization of Pseudomonas aeruginosa PA14.</title>
        <authorList>
            <person name="Ouidir T."/>
            <person name="Jarnier F."/>
            <person name="Cosette P."/>
            <person name="Jouenne T."/>
            <person name="Hardouin J."/>
        </authorList>
    </citation>
    <scope>IDENTIFICATION BY MASS SPECTROMETRY</scope>
    <scope>PHOSPHORYLATION AT THR-416 AND TYR-744</scope>
    <source>
        <strain>UCBPP-PA14</strain>
    </source>
</reference>
<dbReference type="EC" id="2.7.9.2" evidence="2"/>
<dbReference type="EMBL" id="CP000438">
    <property type="protein sequence ID" value="ABJ10956.1"/>
    <property type="molecule type" value="Genomic_DNA"/>
</dbReference>
<dbReference type="RefSeq" id="WP_003098065.1">
    <property type="nucleotide sequence ID" value="NZ_CP034244.1"/>
</dbReference>
<dbReference type="SMR" id="Q02KR1"/>
<dbReference type="iPTMnet" id="Q02KR1"/>
<dbReference type="KEGG" id="pau:PA14_41670"/>
<dbReference type="PseudoCAP" id="PA14_41670"/>
<dbReference type="HOGENOM" id="CLU_007308_6_2_6"/>
<dbReference type="BioCyc" id="PAER208963:G1G74-3491-MONOMER"/>
<dbReference type="UniPathway" id="UPA00138"/>
<dbReference type="Proteomes" id="UP000000653">
    <property type="component" value="Chromosome"/>
</dbReference>
<dbReference type="GO" id="GO:0005524">
    <property type="term" value="F:ATP binding"/>
    <property type="evidence" value="ECO:0007669"/>
    <property type="project" value="UniProtKB-KW"/>
</dbReference>
<dbReference type="GO" id="GO:0046872">
    <property type="term" value="F:metal ion binding"/>
    <property type="evidence" value="ECO:0007669"/>
    <property type="project" value="UniProtKB-KW"/>
</dbReference>
<dbReference type="GO" id="GO:0008986">
    <property type="term" value="F:pyruvate, water dikinase activity"/>
    <property type="evidence" value="ECO:0007669"/>
    <property type="project" value="UniProtKB-EC"/>
</dbReference>
<dbReference type="GO" id="GO:0006094">
    <property type="term" value="P:gluconeogenesis"/>
    <property type="evidence" value="ECO:0007669"/>
    <property type="project" value="UniProtKB-UniPathway"/>
</dbReference>
<dbReference type="FunFam" id="3.20.20.60:FF:000010">
    <property type="entry name" value="Phosphoenolpyruvate synthase"/>
    <property type="match status" value="1"/>
</dbReference>
<dbReference type="FunFam" id="3.30.1490.20:FF:000010">
    <property type="entry name" value="Phosphoenolpyruvate synthase"/>
    <property type="match status" value="1"/>
</dbReference>
<dbReference type="FunFam" id="3.30.470.20:FF:000017">
    <property type="entry name" value="Phosphoenolpyruvate synthase"/>
    <property type="match status" value="1"/>
</dbReference>
<dbReference type="FunFam" id="3.50.30.10:FF:000002">
    <property type="entry name" value="Phosphoenolpyruvate synthase"/>
    <property type="match status" value="1"/>
</dbReference>
<dbReference type="Gene3D" id="3.30.1490.20">
    <property type="entry name" value="ATP-grasp fold, A domain"/>
    <property type="match status" value="1"/>
</dbReference>
<dbReference type="Gene3D" id="3.30.470.20">
    <property type="entry name" value="ATP-grasp fold, B domain"/>
    <property type="match status" value="1"/>
</dbReference>
<dbReference type="Gene3D" id="3.20.20.60">
    <property type="entry name" value="Phosphoenolpyruvate-binding domains"/>
    <property type="match status" value="1"/>
</dbReference>
<dbReference type="Gene3D" id="3.50.30.10">
    <property type="entry name" value="Phosphohistidine domain"/>
    <property type="match status" value="1"/>
</dbReference>
<dbReference type="InterPro" id="IPR013815">
    <property type="entry name" value="ATP_grasp_subdomain_1"/>
</dbReference>
<dbReference type="InterPro" id="IPR008279">
    <property type="entry name" value="PEP-util_enz_mobile_dom"/>
</dbReference>
<dbReference type="InterPro" id="IPR006319">
    <property type="entry name" value="PEP_synth"/>
</dbReference>
<dbReference type="InterPro" id="IPR018274">
    <property type="entry name" value="PEP_util_AS"/>
</dbReference>
<dbReference type="InterPro" id="IPR000121">
    <property type="entry name" value="PEP_util_C"/>
</dbReference>
<dbReference type="InterPro" id="IPR023151">
    <property type="entry name" value="PEP_util_CS"/>
</dbReference>
<dbReference type="InterPro" id="IPR036637">
    <property type="entry name" value="Phosphohistidine_dom_sf"/>
</dbReference>
<dbReference type="InterPro" id="IPR002192">
    <property type="entry name" value="PPDK_AMP/ATP-bd"/>
</dbReference>
<dbReference type="InterPro" id="IPR015813">
    <property type="entry name" value="Pyrv/PenolPyrv_kinase-like_dom"/>
</dbReference>
<dbReference type="InterPro" id="IPR040442">
    <property type="entry name" value="Pyrv_kinase-like_dom_sf"/>
</dbReference>
<dbReference type="NCBIfam" id="TIGR01418">
    <property type="entry name" value="PEP_synth"/>
    <property type="match status" value="1"/>
</dbReference>
<dbReference type="NCBIfam" id="NF005057">
    <property type="entry name" value="PRK06464.1"/>
    <property type="match status" value="1"/>
</dbReference>
<dbReference type="PANTHER" id="PTHR43030">
    <property type="entry name" value="PHOSPHOENOLPYRUVATE SYNTHASE"/>
    <property type="match status" value="1"/>
</dbReference>
<dbReference type="PANTHER" id="PTHR43030:SF1">
    <property type="entry name" value="PHOSPHOENOLPYRUVATE SYNTHASE"/>
    <property type="match status" value="1"/>
</dbReference>
<dbReference type="Pfam" id="PF00391">
    <property type="entry name" value="PEP-utilizers"/>
    <property type="match status" value="1"/>
</dbReference>
<dbReference type="Pfam" id="PF02896">
    <property type="entry name" value="PEP-utilizers_C"/>
    <property type="match status" value="1"/>
</dbReference>
<dbReference type="Pfam" id="PF01326">
    <property type="entry name" value="PPDK_N"/>
    <property type="match status" value="1"/>
</dbReference>
<dbReference type="PIRSF" id="PIRSF000854">
    <property type="entry name" value="PEP_synthase"/>
    <property type="match status" value="1"/>
</dbReference>
<dbReference type="PRINTS" id="PR01736">
    <property type="entry name" value="PHPHTRNFRASE"/>
</dbReference>
<dbReference type="SUPFAM" id="SSF56059">
    <property type="entry name" value="Glutathione synthetase ATP-binding domain-like"/>
    <property type="match status" value="1"/>
</dbReference>
<dbReference type="SUPFAM" id="SSF51621">
    <property type="entry name" value="Phosphoenolpyruvate/pyruvate domain"/>
    <property type="match status" value="1"/>
</dbReference>
<dbReference type="SUPFAM" id="SSF52009">
    <property type="entry name" value="Phosphohistidine domain"/>
    <property type="match status" value="1"/>
</dbReference>
<dbReference type="PROSITE" id="PS00742">
    <property type="entry name" value="PEP_ENZYMES_2"/>
    <property type="match status" value="1"/>
</dbReference>
<dbReference type="PROSITE" id="PS00370">
    <property type="entry name" value="PEP_ENZYMES_PHOS_SITE"/>
    <property type="match status" value="1"/>
</dbReference>
<keyword id="KW-0067">ATP-binding</keyword>
<keyword id="KW-0418">Kinase</keyword>
<keyword id="KW-0460">Magnesium</keyword>
<keyword id="KW-0479">Metal-binding</keyword>
<keyword id="KW-0547">Nucleotide-binding</keyword>
<keyword id="KW-0597">Phosphoprotein</keyword>
<keyword id="KW-0670">Pyruvate</keyword>
<keyword id="KW-0808">Transferase</keyword>
<feature type="chain" id="PRO_0000431474" description="Phosphoenolpyruvate synthase">
    <location>
        <begin position="1"/>
        <end position="791"/>
    </location>
</feature>
<feature type="active site" description="Tele-phosphohistidine intermediate" evidence="1">
    <location>
        <position position="418"/>
    </location>
</feature>
<feature type="active site" description="Proton donor" evidence="1">
    <location>
        <position position="748"/>
    </location>
</feature>
<feature type="binding site" evidence="1">
    <location>
        <position position="508"/>
    </location>
    <ligand>
        <name>substrate</name>
    </ligand>
</feature>
<feature type="binding site" evidence="1">
    <location>
        <position position="575"/>
    </location>
    <ligand>
        <name>substrate</name>
    </ligand>
</feature>
<feature type="binding site" evidence="1">
    <location>
        <position position="677"/>
    </location>
    <ligand>
        <name>Mg(2+)</name>
        <dbReference type="ChEBI" id="CHEBI:18420"/>
    </ligand>
</feature>
<feature type="binding site" evidence="1">
    <location>
        <position position="677"/>
    </location>
    <ligand>
        <name>substrate</name>
    </ligand>
</feature>
<feature type="binding site" evidence="1">
    <location>
        <position position="698"/>
    </location>
    <ligand>
        <name>substrate</name>
    </ligand>
</feature>
<feature type="binding site" evidence="1">
    <location>
        <position position="699"/>
    </location>
    <ligand>
        <name>substrate</name>
    </ligand>
</feature>
<feature type="binding site" evidence="1">
    <location>
        <position position="700"/>
    </location>
    <ligand>
        <name>substrate</name>
    </ligand>
</feature>
<feature type="binding site" evidence="1">
    <location>
        <position position="701"/>
    </location>
    <ligand>
        <name>Mg(2+)</name>
        <dbReference type="ChEBI" id="CHEBI:18420"/>
    </ligand>
</feature>
<feature type="binding site" evidence="1">
    <location>
        <position position="701"/>
    </location>
    <ligand>
        <name>substrate</name>
    </ligand>
</feature>
<feature type="modified residue" description="Phosphothreonine" evidence="3">
    <location>
        <position position="416"/>
    </location>
</feature>
<feature type="modified residue" description="Phosphotyrosine" evidence="3">
    <location>
        <position position="744"/>
    </location>
</feature>
<sequence length="791" mass="85817">MVEYVVSLDKLGVHDVEHVGGKNASLGEMISNLAGAGVSVPGGFATTAQAYRDFLEQSGLNDRIHAALDALDVDDVNALAKTGAQIRQWVMEAEFPARLDSEIRQAFAALANGNDNLAVAVRSSATAEDLPDASFAGQQETFLNIRGVDNVIRAAKEVFASLFNDRAIAYRVHQGFDHKLVALSAGVQRMVRSETGTAGVMFTLDTESGFRDVVFITGAYGLGETVVQGAVNPDEFYVHKPTLEAGRPAILRRNLGSKAIKMIYGDEAKAGRSVKVVDVDRADRARFALSDAEVTELAKQAMIIEKHYGRPMDIEWAKDGDDGKLYIVQARPETVKSRASATVMERYLLKEKGTVLVEGRAIGQRIGAGPVKVINDVSEMDKVQPGDVLVSDMTDPDWEPVMKRASAIVTNRGGRTCHAAIIARELGIPAVVGCGNATQILQDGQGVTVSCAEGDTGFIFEGELGFDVRKNSVDAMPDLPFKIMMNVGNPDRAFDFAQLPNEGVGLARLEFIINRMIGVHPKALLNFAGLPADIKESVEKRIAGYPDPVGFYVEKLVEGISTLAAAFWPKKVIVRLSDFKSNEYANLIGGKLYEPEEENPMLGFRGASRYISESFRDCFELECRALKKVRNEMGLTNVEIMVPFVRTLGEASQVVELLAGNGLKRGENGLKVIMMCELPSNALLADEFLEFFDGFSIGSNDLTQLTLGLDRDSGIVAHLFDERNPAVKKLLANAIAACNKAGKYIGICGQGPSDHPDLARWLMEQGIESVSLNPDSVLDTWFFLAEGQDQA</sequence>